<keyword id="KW-0067">ATP-binding</keyword>
<keyword id="KW-0472">Membrane</keyword>
<keyword id="KW-0547">Nucleotide-binding</keyword>
<keyword id="KW-1185">Reference proteome</keyword>
<keyword id="KW-0677">Repeat</keyword>
<keyword id="KW-0812">Transmembrane</keyword>
<keyword id="KW-1133">Transmembrane helix</keyword>
<keyword id="KW-0813">Transport</keyword>
<gene>
    <name evidence="8" type="primary">ABCG48</name>
    <name evidence="6 7" type="synonym">PDR3</name>
    <name evidence="10" type="ordered locus">Os11g0587600</name>
    <name type="ordered locus">LOC_Os11g37700</name>
    <name type="ORF">P0704G09</name>
</gene>
<protein>
    <recommendedName>
        <fullName evidence="8">ABC transporter G family member 48</fullName>
        <shortName evidence="8">OsABCG48</shortName>
    </recommendedName>
    <alternativeName>
        <fullName evidence="6 7">Pleiotropic drug resistance protein 3</fullName>
        <shortName evidence="7">OsPDR3</shortName>
    </alternativeName>
</protein>
<name>AB48G_ORYSJ</name>
<dbReference type="EMBL" id="AJ535052">
    <property type="protein sequence ID" value="CAD59574.1"/>
    <property type="molecule type" value="Genomic_DNA"/>
</dbReference>
<dbReference type="EMBL" id="DP000010">
    <property type="protein sequence ID" value="ABA94465.2"/>
    <property type="status" value="ALT_SEQ"/>
    <property type="molecule type" value="Genomic_DNA"/>
</dbReference>
<dbReference type="EMBL" id="AP008217">
    <property type="protein sequence ID" value="BAF28537.2"/>
    <property type="status" value="ALT_SEQ"/>
    <property type="molecule type" value="Genomic_DNA"/>
</dbReference>
<dbReference type="EMBL" id="AP014967">
    <property type="status" value="NOT_ANNOTATED_CDS"/>
    <property type="molecule type" value="Genomic_DNA"/>
</dbReference>
<dbReference type="SMR" id="Q8GU84"/>
<dbReference type="FunCoup" id="Q8GU84">
    <property type="interactions" value="478"/>
</dbReference>
<dbReference type="STRING" id="39947.Q8GU84"/>
<dbReference type="PaxDb" id="39947-Q8GU84"/>
<dbReference type="KEGG" id="dosa:Os11g0587600"/>
<dbReference type="eggNOG" id="KOG0065">
    <property type="taxonomic scope" value="Eukaryota"/>
</dbReference>
<dbReference type="HOGENOM" id="CLU_000604_35_3_1"/>
<dbReference type="InParanoid" id="Q8GU84"/>
<dbReference type="Proteomes" id="UP000000763">
    <property type="component" value="Chromosome 11"/>
</dbReference>
<dbReference type="Proteomes" id="UP000059680">
    <property type="component" value="Chromosome 11"/>
</dbReference>
<dbReference type="GO" id="GO:0016020">
    <property type="term" value="C:membrane"/>
    <property type="evidence" value="ECO:0007669"/>
    <property type="project" value="UniProtKB-SubCell"/>
</dbReference>
<dbReference type="GO" id="GO:0140359">
    <property type="term" value="F:ABC-type transporter activity"/>
    <property type="evidence" value="ECO:0007669"/>
    <property type="project" value="InterPro"/>
</dbReference>
<dbReference type="GO" id="GO:0005524">
    <property type="term" value="F:ATP binding"/>
    <property type="evidence" value="ECO:0007669"/>
    <property type="project" value="UniProtKB-KW"/>
</dbReference>
<dbReference type="GO" id="GO:0016887">
    <property type="term" value="F:ATP hydrolysis activity"/>
    <property type="evidence" value="ECO:0007669"/>
    <property type="project" value="InterPro"/>
</dbReference>
<dbReference type="CDD" id="cd03233">
    <property type="entry name" value="ABCG_PDR_domain1"/>
    <property type="match status" value="1"/>
</dbReference>
<dbReference type="CDD" id="cd03232">
    <property type="entry name" value="ABCG_PDR_domain2"/>
    <property type="match status" value="1"/>
</dbReference>
<dbReference type="FunFam" id="3.40.50.300:FF:000157">
    <property type="entry name" value="ABC transporter G family member 34"/>
    <property type="match status" value="1"/>
</dbReference>
<dbReference type="FunFam" id="3.40.50.300:FF:000179">
    <property type="entry name" value="ABC transporter G family member 34"/>
    <property type="match status" value="1"/>
</dbReference>
<dbReference type="Gene3D" id="3.40.50.300">
    <property type="entry name" value="P-loop containing nucleotide triphosphate hydrolases"/>
    <property type="match status" value="2"/>
</dbReference>
<dbReference type="InterPro" id="IPR003593">
    <property type="entry name" value="AAA+_ATPase"/>
</dbReference>
<dbReference type="InterPro" id="IPR013525">
    <property type="entry name" value="ABC2_TM"/>
</dbReference>
<dbReference type="InterPro" id="IPR029481">
    <property type="entry name" value="ABC_trans_N"/>
</dbReference>
<dbReference type="InterPro" id="IPR003439">
    <property type="entry name" value="ABC_transporter-like_ATP-bd"/>
</dbReference>
<dbReference type="InterPro" id="IPR043926">
    <property type="entry name" value="ABCG_dom"/>
</dbReference>
<dbReference type="InterPro" id="IPR034001">
    <property type="entry name" value="ABCG_PDR_1"/>
</dbReference>
<dbReference type="InterPro" id="IPR034003">
    <property type="entry name" value="ABCG_PDR_2"/>
</dbReference>
<dbReference type="InterPro" id="IPR027417">
    <property type="entry name" value="P-loop_NTPase"/>
</dbReference>
<dbReference type="InterPro" id="IPR013581">
    <property type="entry name" value="PDR_assoc"/>
</dbReference>
<dbReference type="PANTHER" id="PTHR48040:SF55">
    <property type="entry name" value="OS02G0318500 PROTEIN"/>
    <property type="match status" value="1"/>
</dbReference>
<dbReference type="PANTHER" id="PTHR48040">
    <property type="entry name" value="PLEIOTROPIC DRUG RESISTANCE PROTEIN 1-LIKE ISOFORM X1"/>
    <property type="match status" value="1"/>
</dbReference>
<dbReference type="Pfam" id="PF01061">
    <property type="entry name" value="ABC2_membrane"/>
    <property type="match status" value="2"/>
</dbReference>
<dbReference type="Pfam" id="PF19055">
    <property type="entry name" value="ABC2_membrane_7"/>
    <property type="match status" value="1"/>
</dbReference>
<dbReference type="Pfam" id="PF00005">
    <property type="entry name" value="ABC_tran"/>
    <property type="match status" value="2"/>
</dbReference>
<dbReference type="Pfam" id="PF14510">
    <property type="entry name" value="ABC_trans_N"/>
    <property type="match status" value="1"/>
</dbReference>
<dbReference type="Pfam" id="PF08370">
    <property type="entry name" value="PDR_assoc"/>
    <property type="match status" value="1"/>
</dbReference>
<dbReference type="SMART" id="SM00382">
    <property type="entry name" value="AAA"/>
    <property type="match status" value="2"/>
</dbReference>
<dbReference type="SUPFAM" id="SSF52540">
    <property type="entry name" value="P-loop containing nucleoside triphosphate hydrolases"/>
    <property type="match status" value="2"/>
</dbReference>
<dbReference type="PROSITE" id="PS50893">
    <property type="entry name" value="ABC_TRANSPORTER_2"/>
    <property type="match status" value="2"/>
</dbReference>
<organism>
    <name type="scientific">Oryza sativa subsp. japonica</name>
    <name type="common">Rice</name>
    <dbReference type="NCBI Taxonomy" id="39947"/>
    <lineage>
        <taxon>Eukaryota</taxon>
        <taxon>Viridiplantae</taxon>
        <taxon>Streptophyta</taxon>
        <taxon>Embryophyta</taxon>
        <taxon>Tracheophyta</taxon>
        <taxon>Spermatophyta</taxon>
        <taxon>Magnoliopsida</taxon>
        <taxon>Liliopsida</taxon>
        <taxon>Poales</taxon>
        <taxon>Poaceae</taxon>
        <taxon>BOP clade</taxon>
        <taxon>Oryzoideae</taxon>
        <taxon>Oryzeae</taxon>
        <taxon>Oryzinae</taxon>
        <taxon>Oryza</taxon>
        <taxon>Oryza sativa</taxon>
    </lineage>
</organism>
<sequence length="1470" mass="164978">MAAAPSASGRRSMSWGSSISQSFRQAEADDPFGRAASQQGHDDDEENLRWAALEKLPTYDRMRRGVIRTALLHHDGGGDGGGAAAAAKDGRMELVDIQKLAAGNLGRALLDRVFQDDSERFLRRLRDRIDMVGIELPTIEVRYEQLSIQAEVFVGSRALPTLTNAATNVLQGLIGRFGSSNKRTINILQDVSGIIKPSRMTLLLGPPSSGKSTLMRALTGKLDKNLKVSGDITYCGHTFSEFYPERTSAYVSQYDLHNAEMTVRETLDFSGRCLGIGARYDMLAELARRERNAGIKPDPEIDAFMKATAVQGHKTNITTDVTLKALGLDICADIIIGDEMIRGISGGQKKRVTTGEMLTGPARALFMDEISTGLDSSSTFEIVKYIGHLVHVMNETVMISLLQPPPETYNLFDDIILLSEGYIVYHGPRENILEFFENAGFRCPERKGIADFLQEVTSKKDQQQYWYHDQERYRYVSVPEFAQRFKSFHVGQKMQKEMQIPYDKSSTHPAALTTTKYGLSSWESLRAVMSREWLLMKRNSFIYIFKVTQLIILAFMSMTVFLRTKMPSGTISDGTKFLGALTFSLITILFNGFAELQLTIKKLPVFYKHRDFLFFPAWTFGVANILLKVPVSLVEAAVWVVLTYYVMGFAPSAGRFFRQFIAFFVTHQMAMAMFRFLGAILKTMVVANTFGMFVLLIVFIFGGFLISRNDIKPWWIWGYWASPMMYSQQAISINEFLASRWAIPNTDATIDEPTVGKAILKSKGLITSDGGFWISIGALIGFLVVFNILYILALTYLSPGGSSNTIVSDEDSEDKTDMKTRNEQQMSQIVHNNGASNTSATSSIPMSGSRSTNQQSRSQIVLPFQPLSLCFNHVNYYVDMPTEMKEQGFTESRLQLLSDISGVFRPGVLTALVGVSGAGKTTLMDVLAGRKTSGVIEGDITLSGYPKKQETFARISGYCEQTDIHSPNVTVYESILYSAWLRLSSDVDTNTRKMFVDEVMSLVELDVLRNALVGLPGVSGLSTEQRKRLTIAVELVANPSVIFMDEPTSGLDARAAAIVMRTVRNTVNTGRTVVCTIHQPSIDIFESFDELLLLKRGGQVIYAGELGRHSHKLVEYFEAVPGVPKITEGYNPATWMLEVTSPIAEARLNVNFAEIYANSELYRKNQELIKELSTPPPGYQDLSFPTKYSQNFYSQCIANFWKQYRSYWKNPPYNAMRYLMTLLNGLVFGTVFWQKGTKISSQQDLFNLLGATYAATFFLGAANCITVQPVVSIERTVFYRERAAGMYSSLSYAFAQACVEVIYNILQGILYTIIIYAMIGYDWKADKFFYFMFFIVASFNYFTLFGMMLVACTPSAMLANILISFVLPLWNLFAGFLVVRPLIPIWWRWYYWANPVSWTIYGVVASQFGKNGDVLSVPGGSPTVVKQFLEDNLGMRHSFLGYVVLTHFGYIIVFFFIFGYAIKYFNFQKR</sequence>
<proteinExistence type="inferred from homology"/>
<feature type="chain" id="PRO_0000433458" description="ABC transporter G family member 48">
    <location>
        <begin position="1"/>
        <end position="1470"/>
    </location>
</feature>
<feature type="transmembrane region" description="Helical" evidence="2">
    <location>
        <begin position="541"/>
        <end position="561"/>
    </location>
</feature>
<feature type="transmembrane region" description="Helical" evidence="2">
    <location>
        <begin position="577"/>
        <end position="597"/>
    </location>
</feature>
<feature type="transmembrane region" description="Helical" evidence="2">
    <location>
        <begin position="629"/>
        <end position="649"/>
    </location>
</feature>
<feature type="transmembrane region" description="Helical" evidence="2">
    <location>
        <begin position="660"/>
        <end position="680"/>
    </location>
</feature>
<feature type="transmembrane region" description="Helical" evidence="2">
    <location>
        <begin position="686"/>
        <end position="706"/>
    </location>
</feature>
<feature type="transmembrane region" description="Helical" evidence="2">
    <location>
        <begin position="772"/>
        <end position="792"/>
    </location>
</feature>
<feature type="transmembrane region" description="Helical" evidence="2">
    <location>
        <begin position="1215"/>
        <end position="1234"/>
    </location>
</feature>
<feature type="transmembrane region" description="Helical" evidence="2">
    <location>
        <begin position="1249"/>
        <end position="1271"/>
    </location>
</feature>
<feature type="transmembrane region" description="Helical" evidence="2">
    <location>
        <begin position="1301"/>
        <end position="1321"/>
    </location>
</feature>
<feature type="transmembrane region" description="Helical" evidence="2">
    <location>
        <begin position="1331"/>
        <end position="1351"/>
    </location>
</feature>
<feature type="transmembrane region" description="Helical" evidence="2">
    <location>
        <begin position="1359"/>
        <end position="1379"/>
    </location>
</feature>
<feature type="transmembrane region" description="Helical" evidence="2">
    <location>
        <begin position="1389"/>
        <end position="1409"/>
    </location>
</feature>
<feature type="transmembrane region" description="Helical" evidence="2">
    <location>
        <begin position="1439"/>
        <end position="1459"/>
    </location>
</feature>
<feature type="domain" description="ABC transporter 1" evidence="3">
    <location>
        <begin position="172"/>
        <end position="445"/>
    </location>
</feature>
<feature type="domain" description="ABC transmembrane type-2 1" evidence="4">
    <location>
        <begin position="523"/>
        <end position="736"/>
    </location>
</feature>
<feature type="domain" description="ABC transporter 2" evidence="3">
    <location>
        <begin position="869"/>
        <end position="1121"/>
    </location>
</feature>
<feature type="domain" description="ABC transmembrane type-2 2" evidence="4">
    <location>
        <begin position="1194"/>
        <end position="1408"/>
    </location>
</feature>
<feature type="region of interest" description="Disordered" evidence="5">
    <location>
        <begin position="1"/>
        <end position="47"/>
    </location>
</feature>
<feature type="region of interest" description="Disordered" evidence="5">
    <location>
        <begin position="828"/>
        <end position="852"/>
    </location>
</feature>
<feature type="compositionally biased region" description="Polar residues" evidence="5">
    <location>
        <begin position="9"/>
        <end position="24"/>
    </location>
</feature>
<feature type="compositionally biased region" description="Low complexity" evidence="5">
    <location>
        <begin position="832"/>
        <end position="843"/>
    </location>
</feature>
<feature type="binding site" evidence="3">
    <location>
        <begin position="205"/>
        <end position="212"/>
    </location>
    <ligand>
        <name>ATP</name>
        <dbReference type="ChEBI" id="CHEBI:30616"/>
        <label>1</label>
    </ligand>
</feature>
<feature type="binding site" evidence="3">
    <location>
        <begin position="914"/>
        <end position="921"/>
    </location>
    <ligand>
        <name>ATP</name>
        <dbReference type="ChEBI" id="CHEBI:30616"/>
        <label>2</label>
    </ligand>
</feature>
<accession>Q8GU84</accession>
<accession>Q0IRX8</accession>
<accession>Q2R1Y0</accession>
<reference key="1">
    <citation type="journal article" date="2003" name="Plant Physiol.">
        <title>The ATP-binding cassette transporters: structure, function, and gene family comparison between rice and Arabidopsis.</title>
        <authorList>
            <person name="Jasinski M."/>
            <person name="Ducos E."/>
            <person name="Martinoia E."/>
            <person name="Boutry M."/>
        </authorList>
    </citation>
    <scope>NUCLEOTIDE SEQUENCE [GENOMIC DNA]</scope>
    <source>
        <strain>cv. Nipponbare</strain>
    </source>
</reference>
<reference key="2">
    <citation type="journal article" date="2005" name="BMC Biol.">
        <title>The sequence of rice chromosomes 11 and 12, rich in disease resistance genes and recent gene duplications.</title>
        <authorList>
            <consortium name="The rice chromosomes 11 and 12 sequencing consortia"/>
        </authorList>
    </citation>
    <scope>NUCLEOTIDE SEQUENCE [LARGE SCALE GENOMIC DNA]</scope>
    <source>
        <strain>cv. Nipponbare</strain>
    </source>
</reference>
<reference key="3">
    <citation type="journal article" date="2005" name="Nature">
        <title>The map-based sequence of the rice genome.</title>
        <authorList>
            <consortium name="International rice genome sequencing project (IRGSP)"/>
        </authorList>
    </citation>
    <scope>NUCLEOTIDE SEQUENCE [LARGE SCALE GENOMIC DNA]</scope>
    <source>
        <strain>cv. Nipponbare</strain>
    </source>
</reference>
<reference key="4">
    <citation type="journal article" date="2008" name="Nucleic Acids Res.">
        <title>The rice annotation project database (RAP-DB): 2008 update.</title>
        <authorList>
            <consortium name="The rice annotation project (RAP)"/>
        </authorList>
    </citation>
    <scope>GENOME REANNOTATION</scope>
    <source>
        <strain>cv. Nipponbare</strain>
    </source>
</reference>
<reference key="5">
    <citation type="journal article" date="2013" name="Rice">
        <title>Improvement of the Oryza sativa Nipponbare reference genome using next generation sequence and optical map data.</title>
        <authorList>
            <person name="Kawahara Y."/>
            <person name="de la Bastide M."/>
            <person name="Hamilton J.P."/>
            <person name="Kanamori H."/>
            <person name="McCombie W.R."/>
            <person name="Ouyang S."/>
            <person name="Schwartz D.C."/>
            <person name="Tanaka T."/>
            <person name="Wu J."/>
            <person name="Zhou S."/>
            <person name="Childs K.L."/>
            <person name="Davidson R.M."/>
            <person name="Lin H."/>
            <person name="Quesada-Ocampo L."/>
            <person name="Vaillancourt B."/>
            <person name="Sakai H."/>
            <person name="Lee S.S."/>
            <person name="Kim J."/>
            <person name="Numa H."/>
            <person name="Itoh T."/>
            <person name="Buell C.R."/>
            <person name="Matsumoto T."/>
        </authorList>
    </citation>
    <scope>GENOME REANNOTATION</scope>
    <source>
        <strain>cv. Nipponbare</strain>
    </source>
</reference>
<reference key="6">
    <citation type="journal article" date="2006" name="FEBS Lett.">
        <title>Organization and function of the plant pleiotropic drug resistance ABC transporter family.</title>
        <authorList>
            <person name="Crouzet J."/>
            <person name="Trombik T."/>
            <person name="Fraysse A.S."/>
            <person name="Boutry M."/>
        </authorList>
    </citation>
    <scope>GENE FAMILY</scope>
    <scope>NOMENCLATURE</scope>
</reference>
<reference key="7">
    <citation type="journal article" date="2008" name="Trends Plant Sci.">
        <title>Plant ABC proteins - a unified nomenclature and updated inventory.</title>
        <authorList>
            <person name="Verrier P.J."/>
            <person name="Bird D."/>
            <person name="Burla B."/>
            <person name="Dassa E."/>
            <person name="Forestier C."/>
            <person name="Geisler M."/>
            <person name="Klein M."/>
            <person name="Kolukisaoglu H.U."/>
            <person name="Lee Y."/>
            <person name="Martinoia E."/>
            <person name="Murphy A."/>
            <person name="Rea P.A."/>
            <person name="Samuels L."/>
            <person name="Schulz B."/>
            <person name="Spalding E.J."/>
            <person name="Yazaki K."/>
            <person name="Theodoulou F.L."/>
        </authorList>
    </citation>
    <scope>GENE FAMILY</scope>
    <scope>NOMENCLATURE</scope>
</reference>
<evidence type="ECO:0000250" key="1"/>
<evidence type="ECO:0000255" key="2"/>
<evidence type="ECO:0000255" key="3">
    <source>
        <dbReference type="PROSITE-ProRule" id="PRU00434"/>
    </source>
</evidence>
<evidence type="ECO:0000255" key="4">
    <source>
        <dbReference type="PROSITE-ProRule" id="PRU00442"/>
    </source>
</evidence>
<evidence type="ECO:0000256" key="5">
    <source>
        <dbReference type="SAM" id="MobiDB-lite"/>
    </source>
</evidence>
<evidence type="ECO:0000303" key="6">
    <source>
    </source>
</evidence>
<evidence type="ECO:0000303" key="7">
    <source>
    </source>
</evidence>
<evidence type="ECO:0000303" key="8">
    <source>
    </source>
</evidence>
<evidence type="ECO:0000305" key="9"/>
<evidence type="ECO:0000312" key="10">
    <source>
        <dbReference type="EMBL" id="BAF28537.2"/>
    </source>
</evidence>
<comment type="function">
    <text evidence="1">May be a general defense protein.</text>
</comment>
<comment type="subcellular location">
    <subcellularLocation>
        <location evidence="2">Membrane</location>
        <topology evidence="2">Multi-pass membrane protein</topology>
    </subcellularLocation>
</comment>
<comment type="similarity">
    <text evidence="9">Belongs to the ABC transporter superfamily. ABCG family. PDR (TC 3.A.1.205) subfamily.</text>
</comment>
<comment type="sequence caution" evidence="9">
    <conflict type="erroneous gene model prediction">
        <sequence resource="EMBL-CDS" id="ABA94465"/>
    </conflict>
</comment>
<comment type="sequence caution" evidence="9">
    <conflict type="erroneous gene model prediction">
        <sequence resource="EMBL-CDS" id="BAF28537"/>
    </conflict>
</comment>